<name>MSHC_STRCO</name>
<comment type="function">
    <text evidence="1">Catalyzes the ATP-dependent condensation of GlcN-Ins and L-cysteine to form L-Cys-GlcN-Ins.</text>
</comment>
<comment type="catalytic activity">
    <reaction>
        <text>1D-myo-inositol 2-amino-2-deoxy-alpha-D-glucopyranoside + L-cysteine + ATP = 1D-myo-inositol 2-(L-cysteinylamino)-2-deoxy-alpha-D-glucopyranoside + AMP + diphosphate + H(+)</text>
        <dbReference type="Rhea" id="RHEA:26176"/>
        <dbReference type="ChEBI" id="CHEBI:15378"/>
        <dbReference type="ChEBI" id="CHEBI:30616"/>
        <dbReference type="ChEBI" id="CHEBI:33019"/>
        <dbReference type="ChEBI" id="CHEBI:35235"/>
        <dbReference type="ChEBI" id="CHEBI:58886"/>
        <dbReference type="ChEBI" id="CHEBI:58887"/>
        <dbReference type="ChEBI" id="CHEBI:456215"/>
        <dbReference type="EC" id="6.3.1.13"/>
    </reaction>
</comment>
<comment type="cofactor">
    <cofactor evidence="1">
        <name>Zn(2+)</name>
        <dbReference type="ChEBI" id="CHEBI:29105"/>
    </cofactor>
    <text evidence="1">Binds 1 zinc ion per subunit.</text>
</comment>
<comment type="subunit">
    <text evidence="1">Monomer.</text>
</comment>
<comment type="induction">
    <text evidence="3">Gradually induced by thiol-oxidant diamide, under (probably indirect) control of SigR.</text>
</comment>
<comment type="similarity">
    <text evidence="4">Belongs to the class-I aminoacyl-tRNA synthetase family. MshC subfamily.</text>
</comment>
<proteinExistence type="evidence at transcript level"/>
<gene>
    <name type="primary">mshC</name>
    <name type="synonym">cysS2</name>
    <name type="ordered locus">SCO1663</name>
    <name type="ORF">SCI52.05c</name>
</gene>
<sequence length="409" mass="44186">MHAWPASEVPALPGQGRDLRIHDTATGGPVTLDPGPVARIYVCGITPYDATHMGHAATYNAFDLVQRVWLDTKRQVHYVQNVTDVDDPLLERAVRDGVDWTALAEQETALFREDMTALRMLPPQHYIGAVEAIPGIVPLVERLRDAGAAYELEGDVYFSVEADPHFGGVSHLDAATMRLLSAERGGDPDRPGKKNPLDPMLWMAAREGEPSWDGGTLGRGRPGWHIECVAIALDHLGMGFDVQGGGSDLAFPHHEMGASHAQALTGEFPMAKAYVHAGMVGLDGEKMSKSKGNLVFVSQLRREGVDPAAIRLTLLAHHYRSDWEWTDQVLQDALARLDRWRAAVSRPDGPPAEALVEEIREALANDLDSPAALAAVDRWAALQQESGGTDIGAPGVVSRAVDALLGVAL</sequence>
<keyword id="KW-0067">ATP-binding</keyword>
<keyword id="KW-0436">Ligase</keyword>
<keyword id="KW-0479">Metal-binding</keyword>
<keyword id="KW-0547">Nucleotide-binding</keyword>
<keyword id="KW-1185">Reference proteome</keyword>
<keyword id="KW-0862">Zinc</keyword>
<accession>Q9ADA4</accession>
<feature type="chain" id="PRO_0000159491" description="L-cysteine:1D-myo-inositol 2-amino-2-deoxy-alpha-D-glucopyranoside ligase">
    <location>
        <begin position="1"/>
        <end position="409"/>
    </location>
</feature>
<feature type="region of interest" description="Disordered" evidence="2">
    <location>
        <begin position="1"/>
        <end position="27"/>
    </location>
</feature>
<feature type="short sequence motif" description="'HIGH' region">
    <location>
        <begin position="45"/>
        <end position="55"/>
    </location>
</feature>
<feature type="short sequence motif" description="'ERGGDP' region">
    <location>
        <begin position="183"/>
        <end position="188"/>
    </location>
</feature>
<feature type="short sequence motif" description="'KMSKS' region">
    <location>
        <begin position="286"/>
        <end position="290"/>
    </location>
</feature>
<feature type="binding site" evidence="1">
    <location>
        <begin position="43"/>
        <end position="46"/>
    </location>
    <ligand>
        <name>L-cysteinyl-5'-AMP</name>
        <dbReference type="ChEBI" id="CHEBI:144924"/>
    </ligand>
</feature>
<feature type="binding site" evidence="1">
    <location>
        <position position="43"/>
    </location>
    <ligand>
        <name>Zn(2+)</name>
        <dbReference type="ChEBI" id="CHEBI:29105"/>
    </ligand>
</feature>
<feature type="binding site" evidence="1">
    <location>
        <position position="58"/>
    </location>
    <ligand>
        <name>L-cysteinyl-5'-AMP</name>
        <dbReference type="ChEBI" id="CHEBI:144924"/>
    </ligand>
</feature>
<feature type="binding site" evidence="1">
    <location>
        <begin position="81"/>
        <end position="83"/>
    </location>
    <ligand>
        <name>L-cysteinyl-5'-AMP</name>
        <dbReference type="ChEBI" id="CHEBI:144924"/>
    </ligand>
</feature>
<feature type="binding site" evidence="1">
    <location>
        <position position="224"/>
    </location>
    <ligand>
        <name>L-cysteinyl-5'-AMP</name>
        <dbReference type="ChEBI" id="CHEBI:144924"/>
    </ligand>
</feature>
<feature type="binding site" evidence="1">
    <location>
        <position position="228"/>
    </location>
    <ligand>
        <name>Zn(2+)</name>
        <dbReference type="ChEBI" id="CHEBI:29105"/>
    </ligand>
</feature>
<feature type="binding site" evidence="1">
    <location>
        <begin position="246"/>
        <end position="248"/>
    </location>
    <ligand>
        <name>L-cysteinyl-5'-AMP</name>
        <dbReference type="ChEBI" id="CHEBI:144924"/>
    </ligand>
</feature>
<feature type="binding site" evidence="1">
    <location>
        <position position="253"/>
    </location>
    <ligand>
        <name>Zn(2+)</name>
        <dbReference type="ChEBI" id="CHEBI:29105"/>
    </ligand>
</feature>
<feature type="binding site" evidence="1">
    <location>
        <position position="280"/>
    </location>
    <ligand>
        <name>L-cysteinyl-5'-AMP</name>
        <dbReference type="ChEBI" id="CHEBI:144924"/>
    </ligand>
</feature>
<organism>
    <name type="scientific">Streptomyces coelicolor (strain ATCC BAA-471 / A3(2) / M145)</name>
    <dbReference type="NCBI Taxonomy" id="100226"/>
    <lineage>
        <taxon>Bacteria</taxon>
        <taxon>Bacillati</taxon>
        <taxon>Actinomycetota</taxon>
        <taxon>Actinomycetes</taxon>
        <taxon>Kitasatosporales</taxon>
        <taxon>Streptomycetaceae</taxon>
        <taxon>Streptomyces</taxon>
        <taxon>Streptomyces albidoflavus group</taxon>
    </lineage>
</organism>
<protein>
    <recommendedName>
        <fullName>L-cysteine:1D-myo-inositol 2-amino-2-deoxy-alpha-D-glucopyranoside ligase</fullName>
        <shortName>L-Cys:GlcN-Ins ligase</shortName>
        <ecNumber>6.3.1.13</ecNumber>
    </recommendedName>
    <alternativeName>
        <fullName>Mycothiol ligase</fullName>
        <shortName>MSH ligase</shortName>
    </alternativeName>
</protein>
<dbReference type="EC" id="6.3.1.13"/>
<dbReference type="EMBL" id="AL939109">
    <property type="protein sequence ID" value="CAC36366.1"/>
    <property type="molecule type" value="Genomic_DNA"/>
</dbReference>
<dbReference type="RefSeq" id="NP_625938.1">
    <property type="nucleotide sequence ID" value="NC_003888.3"/>
</dbReference>
<dbReference type="RefSeq" id="WP_003977162.1">
    <property type="nucleotide sequence ID" value="NZ_VNID01000018.1"/>
</dbReference>
<dbReference type="SMR" id="Q9ADA4"/>
<dbReference type="STRING" id="100226.gene:17759256"/>
<dbReference type="PaxDb" id="100226-SCO1663"/>
<dbReference type="GeneID" id="91387364"/>
<dbReference type="KEGG" id="sco:SCO1663"/>
<dbReference type="PATRIC" id="fig|100226.15.peg.1680"/>
<dbReference type="eggNOG" id="COG0215">
    <property type="taxonomic scope" value="Bacteria"/>
</dbReference>
<dbReference type="HOGENOM" id="CLU_013528_0_0_11"/>
<dbReference type="InParanoid" id="Q9ADA4"/>
<dbReference type="OrthoDB" id="9815130at2"/>
<dbReference type="PhylomeDB" id="Q9ADA4"/>
<dbReference type="Proteomes" id="UP000001973">
    <property type="component" value="Chromosome"/>
</dbReference>
<dbReference type="GO" id="GO:0005737">
    <property type="term" value="C:cytoplasm"/>
    <property type="evidence" value="ECO:0000318"/>
    <property type="project" value="GO_Central"/>
</dbReference>
<dbReference type="GO" id="GO:0005829">
    <property type="term" value="C:cytosol"/>
    <property type="evidence" value="ECO:0000318"/>
    <property type="project" value="GO_Central"/>
</dbReference>
<dbReference type="GO" id="GO:0005524">
    <property type="term" value="F:ATP binding"/>
    <property type="evidence" value="ECO:0000318"/>
    <property type="project" value="GO_Central"/>
</dbReference>
<dbReference type="GO" id="GO:0035446">
    <property type="term" value="F:cysteine-glucosaminylinositol ligase activity"/>
    <property type="evidence" value="ECO:0007669"/>
    <property type="project" value="UniProtKB-UniRule"/>
</dbReference>
<dbReference type="GO" id="GO:0004817">
    <property type="term" value="F:cysteine-tRNA ligase activity"/>
    <property type="evidence" value="ECO:0000318"/>
    <property type="project" value="GO_Central"/>
</dbReference>
<dbReference type="GO" id="GO:0008270">
    <property type="term" value="F:zinc ion binding"/>
    <property type="evidence" value="ECO:0007669"/>
    <property type="project" value="UniProtKB-UniRule"/>
</dbReference>
<dbReference type="GO" id="GO:0006423">
    <property type="term" value="P:cysteinyl-tRNA aminoacylation"/>
    <property type="evidence" value="ECO:0000318"/>
    <property type="project" value="GO_Central"/>
</dbReference>
<dbReference type="GO" id="GO:0010125">
    <property type="term" value="P:mycothiol biosynthetic process"/>
    <property type="evidence" value="ECO:0007669"/>
    <property type="project" value="UniProtKB-UniRule"/>
</dbReference>
<dbReference type="CDD" id="cd07955">
    <property type="entry name" value="Anticodon_Ia_Cys_like"/>
    <property type="match status" value="1"/>
</dbReference>
<dbReference type="CDD" id="cd00672">
    <property type="entry name" value="CysRS_core"/>
    <property type="match status" value="1"/>
</dbReference>
<dbReference type="FunFam" id="1.20.120.640:FF:000001">
    <property type="entry name" value="L-cysteine:1D-myo-inositol 2-amino-2-deoxy-alpha-D-glucopyranoside ligase"/>
    <property type="match status" value="1"/>
</dbReference>
<dbReference type="FunFam" id="3.40.50.620:FF:000134">
    <property type="entry name" value="L-cysteine:1D-myo-inositol 2-amino-2-deoxy-alpha-D-glucopyranoside ligase"/>
    <property type="match status" value="1"/>
</dbReference>
<dbReference type="Gene3D" id="1.20.120.640">
    <property type="entry name" value="Anticodon-binding domain of a subclass of class I aminoacyl-tRNA synthetases"/>
    <property type="match status" value="1"/>
</dbReference>
<dbReference type="Gene3D" id="3.40.50.620">
    <property type="entry name" value="HUPs"/>
    <property type="match status" value="1"/>
</dbReference>
<dbReference type="HAMAP" id="MF_01697">
    <property type="entry name" value="MshC"/>
    <property type="match status" value="1"/>
</dbReference>
<dbReference type="InterPro" id="IPR024909">
    <property type="entry name" value="Cys-tRNA/MSH_ligase"/>
</dbReference>
<dbReference type="InterPro" id="IPR017812">
    <property type="entry name" value="Mycothiol_ligase_MshC"/>
</dbReference>
<dbReference type="InterPro" id="IPR014729">
    <property type="entry name" value="Rossmann-like_a/b/a_fold"/>
</dbReference>
<dbReference type="InterPro" id="IPR032678">
    <property type="entry name" value="tRNA-synt_1_cat_dom"/>
</dbReference>
<dbReference type="NCBIfam" id="TIGR03447">
    <property type="entry name" value="mycothiol_MshC"/>
    <property type="match status" value="1"/>
</dbReference>
<dbReference type="PANTHER" id="PTHR10890:SF3">
    <property type="entry name" value="CYSTEINE--TRNA LIGASE, CYTOPLASMIC"/>
    <property type="match status" value="1"/>
</dbReference>
<dbReference type="PANTHER" id="PTHR10890">
    <property type="entry name" value="CYSTEINYL-TRNA SYNTHETASE"/>
    <property type="match status" value="1"/>
</dbReference>
<dbReference type="Pfam" id="PF01406">
    <property type="entry name" value="tRNA-synt_1e"/>
    <property type="match status" value="1"/>
</dbReference>
<dbReference type="PRINTS" id="PR00983">
    <property type="entry name" value="TRNASYNTHCYS"/>
</dbReference>
<dbReference type="SUPFAM" id="SSF52374">
    <property type="entry name" value="Nucleotidylyl transferase"/>
    <property type="match status" value="1"/>
</dbReference>
<evidence type="ECO:0000250" key="1"/>
<evidence type="ECO:0000256" key="2">
    <source>
        <dbReference type="SAM" id="MobiDB-lite"/>
    </source>
</evidence>
<evidence type="ECO:0000269" key="3">
    <source>
    </source>
</evidence>
<evidence type="ECO:0000305" key="4"/>
<reference key="1">
    <citation type="journal article" date="2002" name="Nature">
        <title>Complete genome sequence of the model actinomycete Streptomyces coelicolor A3(2).</title>
        <authorList>
            <person name="Bentley S.D."/>
            <person name="Chater K.F."/>
            <person name="Cerdeno-Tarraga A.-M."/>
            <person name="Challis G.L."/>
            <person name="Thomson N.R."/>
            <person name="James K.D."/>
            <person name="Harris D.E."/>
            <person name="Quail M.A."/>
            <person name="Kieser H."/>
            <person name="Harper D."/>
            <person name="Bateman A."/>
            <person name="Brown S."/>
            <person name="Chandra G."/>
            <person name="Chen C.W."/>
            <person name="Collins M."/>
            <person name="Cronin A."/>
            <person name="Fraser A."/>
            <person name="Goble A."/>
            <person name="Hidalgo J."/>
            <person name="Hornsby T."/>
            <person name="Howarth S."/>
            <person name="Huang C.-H."/>
            <person name="Kieser T."/>
            <person name="Larke L."/>
            <person name="Murphy L.D."/>
            <person name="Oliver K."/>
            <person name="O'Neil S."/>
            <person name="Rabbinowitsch E."/>
            <person name="Rajandream M.A."/>
            <person name="Rutherford K.M."/>
            <person name="Rutter S."/>
            <person name="Seeger K."/>
            <person name="Saunders D."/>
            <person name="Sharp S."/>
            <person name="Squares R."/>
            <person name="Squares S."/>
            <person name="Taylor K."/>
            <person name="Warren T."/>
            <person name="Wietzorrek A."/>
            <person name="Woodward J.R."/>
            <person name="Barrell B.G."/>
            <person name="Parkhill J."/>
            <person name="Hopwood D.A."/>
        </authorList>
    </citation>
    <scope>NUCLEOTIDE SEQUENCE [LARGE SCALE GENOMIC DNA]</scope>
    <source>
        <strain>ATCC BAA-471 / A3(2) / M145</strain>
    </source>
</reference>
<reference key="2">
    <citation type="journal article" date="2008" name="Mol. Microbiol.">
        <title>Mycothiol regulates and is regulated by a thiol-specific antisigma factor RsrA and sigma(R) in Streptomyces coelicolor.</title>
        <authorList>
            <person name="Park J.H."/>
            <person name="Roe J.H."/>
        </authorList>
    </citation>
    <scope>INDUCTION</scope>
    <source>
        <strain>ATCC BAA-471 / A3(2) / M145</strain>
    </source>
</reference>